<reference key="1">
    <citation type="journal article" date="2004" name="Biochem. Biophys. Res. Commun.">
        <title>Identification of two novel clusters of ultrahigh-sulfur keratin-associated protein genes on human chromosome 11.</title>
        <authorList>
            <person name="Yahagi S."/>
            <person name="Shibuya K."/>
            <person name="Obayashi I."/>
            <person name="Masaki H."/>
            <person name="Kurata Y."/>
            <person name="Kudoh J."/>
            <person name="Shimizu N."/>
        </authorList>
    </citation>
    <scope>NUCLEOTIDE SEQUENCE [MRNA]</scope>
    <scope>TISSUE SPECIFICITY</scope>
    <source>
        <tissue>Hair root</tissue>
    </source>
</reference>
<comment type="function">
    <text>In the hair cortex, hair keratin intermediate filaments are embedded in an interfilamentous matrix, consisting of hair keratin-associated protein (KRTAP), which are essential for the formation of a rigid and resistant hair shaft through their extensive disulfide bond cross-linking with abundant cysteine residues of hair keratins. The matrix proteins include the high-sulfur and high-glycine-tyrosine keratins.</text>
</comment>
<comment type="subunit">
    <text>Interacts with hair keratins.</text>
</comment>
<comment type="interaction">
    <interactant intactId="EBI-11963072">
        <id>Q6L8H1</id>
    </interactant>
    <interactant intactId="EBI-10173507">
        <id>Q6UY14-3</id>
        <label>ADAMTSL4</label>
    </interactant>
    <organismsDiffer>false</organismsDiffer>
    <experiments>3</experiments>
</comment>
<comment type="interaction">
    <interactant intactId="EBI-11963072">
        <id>Q6L8H1</id>
    </interactant>
    <interactant intactId="EBI-356517">
        <id>Q9UL15</id>
        <label>BAG5</label>
    </interactant>
    <organismsDiffer>false</organismsDiffer>
    <experiments>3</experiments>
</comment>
<comment type="interaction">
    <interactant intactId="EBI-11963072">
        <id>Q6L8H1</id>
    </interactant>
    <interactant intactId="EBI-744545">
        <id>Q8NEC5</id>
        <label>CATSPER1</label>
    </interactant>
    <organismsDiffer>false</organismsDiffer>
    <experiments>3</experiments>
</comment>
<comment type="interaction">
    <interactant intactId="EBI-11963072">
        <id>Q6L8H1</id>
    </interactant>
    <interactant intactId="EBI-713677">
        <id>Q9UGL9</id>
        <label>CRCT1</label>
    </interactant>
    <organismsDiffer>false</organismsDiffer>
    <experiments>3</experiments>
</comment>
<comment type="interaction">
    <interactant intactId="EBI-11963072">
        <id>Q6L8H1</id>
    </interactant>
    <interactant intactId="EBI-10192698">
        <id>Q02930-3</id>
        <label>CREB5</label>
    </interactant>
    <organismsDiffer>false</organismsDiffer>
    <experiments>3</experiments>
</comment>
<comment type="interaction">
    <interactant intactId="EBI-11963072">
        <id>Q6L8H1</id>
    </interactant>
    <interactant intactId="EBI-2212355">
        <id>Q49AN0</id>
        <label>CRY2</label>
    </interactant>
    <organismsDiffer>false</organismsDiffer>
    <experiments>3</experiments>
</comment>
<comment type="interaction">
    <interactant intactId="EBI-11963072">
        <id>Q6L8H1</id>
    </interactant>
    <interactant intactId="EBI-3867333">
        <id>A8MQ03</id>
        <label>CYSRT1</label>
    </interactant>
    <organismsDiffer>false</organismsDiffer>
    <experiments>3</experiments>
</comment>
<comment type="interaction">
    <interactant intactId="EBI-11963072">
        <id>Q6L8H1</id>
    </interactant>
    <interactant intactId="EBI-374781">
        <id>O76003</id>
        <label>GLRX3</label>
    </interactant>
    <organismsDiffer>false</organismsDiffer>
    <experiments>3</experiments>
</comment>
<comment type="interaction">
    <interactant intactId="EBI-11963072">
        <id>Q6L8H1</id>
    </interactant>
    <interactant intactId="EBI-740785">
        <id>P49639</id>
        <label>HOXA1</label>
    </interactant>
    <organismsDiffer>false</organismsDiffer>
    <experiments>8</experiments>
</comment>
<comment type="interaction">
    <interactant intactId="EBI-11963072">
        <id>Q6L8H1</id>
    </interactant>
    <interactant intactId="EBI-11959885">
        <id>Q07627</id>
        <label>KRTAP1-1</label>
    </interactant>
    <organismsDiffer>false</organismsDiffer>
    <experiments>3</experiments>
</comment>
<comment type="interaction">
    <interactant intactId="EBI-11963072">
        <id>Q6L8H1</id>
    </interactant>
    <interactant intactId="EBI-11749135">
        <id>Q8IUG1</id>
        <label>KRTAP1-3</label>
    </interactant>
    <organismsDiffer>false</organismsDiffer>
    <experiments>3</experiments>
</comment>
<comment type="interaction">
    <interactant intactId="EBI-11963072">
        <id>Q6L8H1</id>
    </interactant>
    <interactant intactId="EBI-10171774">
        <id>P60410</id>
        <label>KRTAP10-8</label>
    </interactant>
    <organismsDiffer>false</organismsDiffer>
    <experiments>3</experiments>
</comment>
<comment type="interaction">
    <interactant intactId="EBI-11963072">
        <id>Q6L8H1</id>
    </interactant>
    <interactant intactId="EBI-1052037">
        <id>Q8IUC1</id>
        <label>KRTAP11-1</label>
    </interactant>
    <organismsDiffer>false</organismsDiffer>
    <experiments>3</experiments>
</comment>
<comment type="interaction">
    <interactant intactId="EBI-11963072">
        <id>Q6L8H1</id>
    </interactant>
    <interactant intactId="EBI-11958178">
        <id>Q701N4</id>
        <label>KRTAP5-2</label>
    </interactant>
    <organismsDiffer>false</organismsDiffer>
    <experiments>3</experiments>
</comment>
<comment type="interaction">
    <interactant intactId="EBI-11963072">
        <id>Q6L8H1</id>
    </interactant>
    <interactant intactId="EBI-3958099">
        <id>P26371</id>
        <label>KRTAP5-9</label>
    </interactant>
    <organismsDiffer>false</organismsDiffer>
    <experiments>6</experiments>
</comment>
<comment type="interaction">
    <interactant intactId="EBI-11963072">
        <id>Q6L8H1</id>
    </interactant>
    <interactant intactId="EBI-1044640">
        <id>Q9BYQ4</id>
        <label>KRTAP9-2</label>
    </interactant>
    <organismsDiffer>false</organismsDiffer>
    <experiments>3</experiments>
</comment>
<comment type="interaction">
    <interactant intactId="EBI-11963072">
        <id>Q6L8H1</id>
    </interactant>
    <interactant intactId="EBI-1043191">
        <id>Q9BYQ3</id>
        <label>KRTAP9-3</label>
    </interactant>
    <organismsDiffer>false</organismsDiffer>
    <experiments>3</experiments>
</comment>
<comment type="interaction">
    <interactant intactId="EBI-11963072">
        <id>Q6L8H1</id>
    </interactant>
    <interactant intactId="EBI-10245913">
        <id>Q5T7P3</id>
        <label>LCE1B</label>
    </interactant>
    <organismsDiffer>false</organismsDiffer>
    <experiments>5</experiments>
</comment>
<comment type="interaction">
    <interactant intactId="EBI-11963072">
        <id>Q6L8H1</id>
    </interactant>
    <interactant intactId="EBI-12224199">
        <id>Q5T751</id>
        <label>LCE1C</label>
    </interactant>
    <organismsDiffer>false</organismsDiffer>
    <experiments>3</experiments>
</comment>
<comment type="interaction">
    <interactant intactId="EBI-11963072">
        <id>Q6L8H1</id>
    </interactant>
    <interactant intactId="EBI-11741311">
        <id>Q5T752</id>
        <label>LCE1D</label>
    </interactant>
    <organismsDiffer>false</organismsDiffer>
    <experiments>3</experiments>
</comment>
<comment type="interaction">
    <interactant intactId="EBI-11963072">
        <id>Q6L8H1</id>
    </interactant>
    <interactant intactId="EBI-11955335">
        <id>Q5T753</id>
        <label>LCE1E</label>
    </interactant>
    <organismsDiffer>false</organismsDiffer>
    <experiments>3</experiments>
</comment>
<comment type="interaction">
    <interactant intactId="EBI-11963072">
        <id>Q6L8H1</id>
    </interactant>
    <interactant intactId="EBI-11958008">
        <id>Q5T754</id>
        <label>LCE1F</label>
    </interactant>
    <organismsDiffer>false</organismsDiffer>
    <experiments>3</experiments>
</comment>
<comment type="interaction">
    <interactant intactId="EBI-11963072">
        <id>Q6L8H1</id>
    </interactant>
    <interactant intactId="EBI-11973993">
        <id>Q5TA81</id>
        <label>LCE2C</label>
    </interactant>
    <organismsDiffer>false</organismsDiffer>
    <experiments>3</experiments>
</comment>
<comment type="interaction">
    <interactant intactId="EBI-11963072">
        <id>Q6L8H1</id>
    </interactant>
    <interactant intactId="EBI-9394625">
        <id>Q5TA76</id>
        <label>LCE3A</label>
    </interactant>
    <organismsDiffer>false</organismsDiffer>
    <experiments>5</experiments>
</comment>
<comment type="interaction">
    <interactant intactId="EBI-11963072">
        <id>Q6L8H1</id>
    </interactant>
    <interactant intactId="EBI-11974495">
        <id>Q5TA77</id>
        <label>LCE3B</label>
    </interactant>
    <organismsDiffer>false</organismsDiffer>
    <experiments>3</experiments>
</comment>
<comment type="interaction">
    <interactant intactId="EBI-11963072">
        <id>Q6L8H1</id>
    </interactant>
    <interactant intactId="EBI-10245291">
        <id>Q5T5A8</id>
        <label>LCE3C</label>
    </interactant>
    <organismsDiffer>false</organismsDiffer>
    <experiments>5</experiments>
</comment>
<comment type="interaction">
    <interactant intactId="EBI-11963072">
        <id>Q6L8H1</id>
    </interactant>
    <interactant intactId="EBI-10246358">
        <id>Q5TA78</id>
        <label>LCE4A</label>
    </interactant>
    <organismsDiffer>false</organismsDiffer>
    <experiments>3</experiments>
</comment>
<comment type="interaction">
    <interactant intactId="EBI-11963072">
        <id>Q6L8H1</id>
    </interactant>
    <interactant intactId="EBI-11955689">
        <id>Q5TCM9</id>
        <label>LCE5A</label>
    </interactant>
    <organismsDiffer>false</organismsDiffer>
    <experiments>4</experiments>
</comment>
<comment type="interaction">
    <interactant intactId="EBI-11963072">
        <id>Q6L8H1</id>
    </interactant>
    <interactant intactId="EBI-16439278">
        <id>Q6FHY5</id>
        <label>MEOX2</label>
    </interactant>
    <organismsDiffer>false</organismsDiffer>
    <experiments>3</experiments>
</comment>
<comment type="interaction">
    <interactant intactId="EBI-11963072">
        <id>Q6L8H1</id>
    </interactant>
    <interactant intactId="EBI-22310682">
        <id>P0DPK4</id>
        <label>NOTCH2NLC</label>
    </interactant>
    <organismsDiffer>false</organismsDiffer>
    <experiments>3</experiments>
</comment>
<comment type="interaction">
    <interactant intactId="EBI-11963072">
        <id>Q6L8H1</id>
    </interactant>
    <interactant intactId="EBI-1210753">
        <id>Q7Z417</id>
        <label>NUFIP2</label>
    </interactant>
    <organismsDiffer>false</organismsDiffer>
    <experiments>3</experiments>
</comment>
<comment type="interaction">
    <interactant intactId="EBI-11963072">
        <id>Q6L8H1</id>
    </interactant>
    <interactant intactId="EBI-740446">
        <id>P32242</id>
        <label>OTX1</label>
    </interactant>
    <organismsDiffer>false</organismsDiffer>
    <experiments>3</experiments>
</comment>
<comment type="interaction">
    <interactant intactId="EBI-11963072">
        <id>Q6L8H1</id>
    </interactant>
    <interactant intactId="EBI-742388">
        <id>Q9H8W4</id>
        <label>PLEKHF2</label>
    </interactant>
    <organismsDiffer>false</organismsDiffer>
    <experiments>3</experiments>
</comment>
<comment type="interaction">
    <interactant intactId="EBI-11963072">
        <id>Q6L8H1</id>
    </interactant>
    <interactant intactId="EBI-17236143">
        <id>Q12837</id>
        <label>POU4F2</label>
    </interactant>
    <organismsDiffer>false</organismsDiffer>
    <experiments>3</experiments>
</comment>
<comment type="interaction">
    <interactant intactId="EBI-11963072">
        <id>Q6L8H1</id>
    </interactant>
    <interactant intactId="EBI-3918154">
        <id>Q9UGC6</id>
        <label>RGS17</label>
    </interactant>
    <organismsDiffer>false</organismsDiffer>
    <experiments>3</experiments>
</comment>
<comment type="interaction">
    <interactant intactId="EBI-11963072">
        <id>Q6L8H1</id>
    </interactant>
    <interactant intactId="EBI-750494">
        <id>P49901</id>
        <label>SMCP</label>
    </interactant>
    <organismsDiffer>false</organismsDiffer>
    <experiments>3</experiments>
</comment>
<comment type="interaction">
    <interactant intactId="EBI-11963072">
        <id>Q6L8H1</id>
    </interactant>
    <interactant intactId="EBI-10180829">
        <id>Q7KZS0</id>
        <label>UBE2I</label>
    </interactant>
    <organismsDiffer>false</organismsDiffer>
    <experiments>3</experiments>
</comment>
<comment type="tissue specificity">
    <text evidence="1">Restricted to hair root, not detected in any other tissues.</text>
</comment>
<comment type="similarity">
    <text evidence="2">Belongs to the KRTAP type 5 family.</text>
</comment>
<accession>Q6L8H1</accession>
<dbReference type="EMBL" id="AB126073">
    <property type="protein sequence ID" value="BAD20200.1"/>
    <property type="molecule type" value="mRNA"/>
</dbReference>
<dbReference type="RefSeq" id="NP_001012727.1">
    <property type="nucleotide sequence ID" value="NM_001012709.1"/>
</dbReference>
<dbReference type="BioGRID" id="132268">
    <property type="interactions" value="62"/>
</dbReference>
<dbReference type="FunCoup" id="Q6L8H1">
    <property type="interactions" value="333"/>
</dbReference>
<dbReference type="IntAct" id="Q6L8H1">
    <property type="interactions" value="37"/>
</dbReference>
<dbReference type="iPTMnet" id="Q6L8H1"/>
<dbReference type="PhosphoSitePlus" id="Q6L8H1"/>
<dbReference type="BioMuta" id="KRTAP5-4"/>
<dbReference type="MassIVE" id="Q6L8H1"/>
<dbReference type="DNASU" id="387267"/>
<dbReference type="Ensembl" id="ENST00000630519.1">
    <property type="protein sequence ID" value="ENSP00000486225.1"/>
    <property type="gene ID" value="ENSG00000278620.3"/>
</dbReference>
<dbReference type="GeneID" id="387267"/>
<dbReference type="KEGG" id="hsa:387267"/>
<dbReference type="UCSC" id="uc031ypm.1">
    <property type="organism name" value="human"/>
</dbReference>
<dbReference type="AGR" id="HGNC:23599"/>
<dbReference type="CTD" id="387267"/>
<dbReference type="DisGeNET" id="387267"/>
<dbReference type="GeneCards" id="KRTAP5-4"/>
<dbReference type="HGNC" id="HGNC:23599">
    <property type="gene designation" value="KRTAP5-4"/>
</dbReference>
<dbReference type="neXtProt" id="NX_Q6L8H1"/>
<dbReference type="PharmGKB" id="PA134916197"/>
<dbReference type="InParanoid" id="Q6L8H1"/>
<dbReference type="PAN-GO" id="Q6L8H1">
    <property type="GO annotations" value="0 GO annotations based on evolutionary models"/>
</dbReference>
<dbReference type="PathwayCommons" id="Q6L8H1"/>
<dbReference type="Reactome" id="R-HSA-6805567">
    <property type="pathway name" value="Keratinization"/>
</dbReference>
<dbReference type="SignaLink" id="Q6L8H1"/>
<dbReference type="BioGRID-ORCS" id="387267">
    <property type="hits" value="6 hits in 160 CRISPR screens"/>
</dbReference>
<dbReference type="GenomeRNAi" id="387267"/>
<dbReference type="Pharos" id="Q6L8H1">
    <property type="development level" value="Tdark"/>
</dbReference>
<dbReference type="PRO" id="PR:Q6L8H1"/>
<dbReference type="Proteomes" id="UP000005640">
    <property type="component" value="Unplaced"/>
</dbReference>
<dbReference type="RNAct" id="Q6L8H1">
    <property type="molecule type" value="protein"/>
</dbReference>
<dbReference type="GO" id="GO:0005829">
    <property type="term" value="C:cytosol"/>
    <property type="evidence" value="ECO:0000304"/>
    <property type="project" value="Reactome"/>
</dbReference>
<dbReference type="GO" id="GO:0005882">
    <property type="term" value="C:intermediate filament"/>
    <property type="evidence" value="ECO:0007669"/>
    <property type="project" value="UniProtKB-KW"/>
</dbReference>
<keyword id="KW-0416">Keratin</keyword>
<keyword id="KW-1267">Proteomics identification</keyword>
<keyword id="KW-1185">Reference proteome</keyword>
<keyword id="KW-0677">Repeat</keyword>
<evidence type="ECO:0000269" key="1">
    <source>
    </source>
</evidence>
<evidence type="ECO:0000305" key="2"/>
<organism>
    <name type="scientific">Homo sapiens</name>
    <name type="common">Human</name>
    <dbReference type="NCBI Taxonomy" id="9606"/>
    <lineage>
        <taxon>Eukaryota</taxon>
        <taxon>Metazoa</taxon>
        <taxon>Chordata</taxon>
        <taxon>Craniata</taxon>
        <taxon>Vertebrata</taxon>
        <taxon>Euteleostomi</taxon>
        <taxon>Mammalia</taxon>
        <taxon>Eutheria</taxon>
        <taxon>Euarchontoglires</taxon>
        <taxon>Primates</taxon>
        <taxon>Haplorrhini</taxon>
        <taxon>Catarrhini</taxon>
        <taxon>Hominidae</taxon>
        <taxon>Homo</taxon>
    </lineage>
</organism>
<sequence length="288" mass="25249">MGCCGCSGGCGSGCGGCGSGCGGCGSGCGGCGSGCGGCGSGCGGCGSSCCVPICCCKPVCCCVPACSCSSCGSCGGSKGGYGSCGGSKGGCVSCGGSKGGCGSCGGSKGGCGSCGGSKGGCGSCGGSKGGCVSCGGSKGGCGSCGGSKGGCVSCGGSKGGCGSCGGSKGGCGSCGGSKGGCGSCGGSKGGCGSCGCSQCSCCKPCCCSSGCGSSCCQSSCCKPCCSSSGCGSSCCQSSCCKPYCCQSSCCKPCCSSSGCGSSCCQSSCCNPCCSQSSCCVPVCCQCKI</sequence>
<feature type="chain" id="PRO_0000184102" description="Keratin-associated protein 5-4">
    <location>
        <begin position="1"/>
        <end position="288"/>
    </location>
</feature>
<feature type="repeat" description="1">
    <location>
        <begin position="49"/>
        <end position="52"/>
    </location>
</feature>
<feature type="repeat" description="2">
    <location>
        <begin position="55"/>
        <end position="58"/>
    </location>
</feature>
<feature type="repeat" description="3">
    <location>
        <begin position="61"/>
        <end position="64"/>
    </location>
</feature>
<feature type="repeat" description="4">
    <location>
        <begin position="201"/>
        <end position="204"/>
    </location>
</feature>
<feature type="repeat" description="5">
    <location>
        <begin position="220"/>
        <end position="223"/>
    </location>
</feature>
<feature type="repeat" description="6">
    <location>
        <begin position="239"/>
        <end position="242"/>
    </location>
</feature>
<feature type="repeat" description="7">
    <location>
        <begin position="249"/>
        <end position="252"/>
    </location>
</feature>
<feature type="repeat" description="8">
    <location>
        <begin position="268"/>
        <end position="271"/>
    </location>
</feature>
<feature type="repeat" description="9">
    <location>
        <begin position="278"/>
        <end position="281"/>
    </location>
</feature>
<feature type="region of interest" description="9 X 4 AA repeats of C-C-X-P">
    <location>
        <begin position="49"/>
        <end position="281"/>
    </location>
</feature>
<protein>
    <recommendedName>
        <fullName>Keratin-associated protein 5-4</fullName>
    </recommendedName>
    <alternativeName>
        <fullName>Keratin-associated protein 5.4</fullName>
    </alternativeName>
    <alternativeName>
        <fullName>Ultrahigh sulfur keratin-associated protein 5.4</fullName>
    </alternativeName>
</protein>
<name>KRA54_HUMAN</name>
<proteinExistence type="evidence at protein level"/>
<gene>
    <name type="primary">KRTAP5-4</name>
    <name type="synonym">KAP5.4</name>
    <name type="synonym">KRTAP5.4</name>
</gene>